<name>RNPA_STRPB</name>
<feature type="chain" id="PRO_1000021476" description="Ribonuclease P protein component">
    <location>
        <begin position="1"/>
        <end position="119"/>
    </location>
</feature>
<gene>
    <name evidence="1" type="primary">rnpA</name>
    <name type="ordered locus">MGAS2096_Spy0222</name>
</gene>
<keyword id="KW-0255">Endonuclease</keyword>
<keyword id="KW-0378">Hydrolase</keyword>
<keyword id="KW-0540">Nuclease</keyword>
<keyword id="KW-0694">RNA-binding</keyword>
<keyword id="KW-0819">tRNA processing</keyword>
<protein>
    <recommendedName>
        <fullName evidence="1">Ribonuclease P protein component</fullName>
        <shortName evidence="1">RNase P protein</shortName>
        <shortName evidence="1">RNaseP protein</shortName>
        <ecNumber evidence="1">3.1.26.5</ecNumber>
    </recommendedName>
    <alternativeName>
        <fullName evidence="1">Protein C5</fullName>
    </alternativeName>
</protein>
<accession>Q1JDN4</accession>
<sequence length="119" mass="13839">MKKTYRVKCEKDFQAIFKDGKSTANRKFVIYHLNRGQDHFRVGISVGKKIGNAVTRNAVKRKIRHVIMALGYQLKSEDFVVIARKGVESLEYQELQQNLHHVLKLAQLLEKGFESEEKH</sequence>
<comment type="function">
    <text evidence="1">RNaseP catalyzes the removal of the 5'-leader sequence from pre-tRNA to produce the mature 5'-terminus. It can also cleave other RNA substrates such as 4.5S RNA. The protein component plays an auxiliary but essential role in vivo by binding to the 5'-leader sequence and broadening the substrate specificity of the ribozyme.</text>
</comment>
<comment type="catalytic activity">
    <reaction evidence="1">
        <text>Endonucleolytic cleavage of RNA, removing 5'-extranucleotides from tRNA precursor.</text>
        <dbReference type="EC" id="3.1.26.5"/>
    </reaction>
</comment>
<comment type="subunit">
    <text evidence="1">Consists of a catalytic RNA component (M1 or rnpB) and a protein subunit.</text>
</comment>
<comment type="similarity">
    <text evidence="1">Belongs to the RnpA family.</text>
</comment>
<reference key="1">
    <citation type="journal article" date="2006" name="Proc. Natl. Acad. Sci. U.S.A.">
        <title>Molecular genetic anatomy of inter- and intraserotype variation in the human bacterial pathogen group A Streptococcus.</title>
        <authorList>
            <person name="Beres S.B."/>
            <person name="Richter E.W."/>
            <person name="Nagiec M.J."/>
            <person name="Sumby P."/>
            <person name="Porcella S.F."/>
            <person name="DeLeo F.R."/>
            <person name="Musser J.M."/>
        </authorList>
    </citation>
    <scope>NUCLEOTIDE SEQUENCE [LARGE SCALE GENOMIC DNA]</scope>
    <source>
        <strain>MGAS2096</strain>
    </source>
</reference>
<evidence type="ECO:0000255" key="1">
    <source>
        <dbReference type="HAMAP-Rule" id="MF_00227"/>
    </source>
</evidence>
<organism>
    <name type="scientific">Streptococcus pyogenes serotype M12 (strain MGAS2096)</name>
    <dbReference type="NCBI Taxonomy" id="370553"/>
    <lineage>
        <taxon>Bacteria</taxon>
        <taxon>Bacillati</taxon>
        <taxon>Bacillota</taxon>
        <taxon>Bacilli</taxon>
        <taxon>Lactobacillales</taxon>
        <taxon>Streptococcaceae</taxon>
        <taxon>Streptococcus</taxon>
    </lineage>
</organism>
<dbReference type="EC" id="3.1.26.5" evidence="1"/>
<dbReference type="EMBL" id="CP000261">
    <property type="protein sequence ID" value="ABF35274.1"/>
    <property type="molecule type" value="Genomic_DNA"/>
</dbReference>
<dbReference type="SMR" id="Q1JDN4"/>
<dbReference type="KEGG" id="spj:MGAS2096_Spy0222"/>
<dbReference type="HOGENOM" id="CLU_117179_9_1_9"/>
<dbReference type="GO" id="GO:0030677">
    <property type="term" value="C:ribonuclease P complex"/>
    <property type="evidence" value="ECO:0007669"/>
    <property type="project" value="TreeGrafter"/>
</dbReference>
<dbReference type="GO" id="GO:0042781">
    <property type="term" value="F:3'-tRNA processing endoribonuclease activity"/>
    <property type="evidence" value="ECO:0007669"/>
    <property type="project" value="TreeGrafter"/>
</dbReference>
<dbReference type="GO" id="GO:0004526">
    <property type="term" value="F:ribonuclease P activity"/>
    <property type="evidence" value="ECO:0007669"/>
    <property type="project" value="UniProtKB-UniRule"/>
</dbReference>
<dbReference type="GO" id="GO:0000049">
    <property type="term" value="F:tRNA binding"/>
    <property type="evidence" value="ECO:0007669"/>
    <property type="project" value="UniProtKB-UniRule"/>
</dbReference>
<dbReference type="GO" id="GO:0001682">
    <property type="term" value="P:tRNA 5'-leader removal"/>
    <property type="evidence" value="ECO:0007669"/>
    <property type="project" value="UniProtKB-UniRule"/>
</dbReference>
<dbReference type="FunFam" id="3.30.230.10:FF:000021">
    <property type="entry name" value="Ribonuclease P protein component"/>
    <property type="match status" value="1"/>
</dbReference>
<dbReference type="Gene3D" id="3.30.230.10">
    <property type="match status" value="1"/>
</dbReference>
<dbReference type="HAMAP" id="MF_00227">
    <property type="entry name" value="RNase_P"/>
    <property type="match status" value="1"/>
</dbReference>
<dbReference type="InterPro" id="IPR020568">
    <property type="entry name" value="Ribosomal_Su5_D2-typ_SF"/>
</dbReference>
<dbReference type="InterPro" id="IPR014721">
    <property type="entry name" value="Ribsml_uS5_D2-typ_fold_subgr"/>
</dbReference>
<dbReference type="InterPro" id="IPR000100">
    <property type="entry name" value="RNase_P"/>
</dbReference>
<dbReference type="InterPro" id="IPR020539">
    <property type="entry name" value="RNase_P_CS"/>
</dbReference>
<dbReference type="NCBIfam" id="TIGR00188">
    <property type="entry name" value="rnpA"/>
    <property type="match status" value="1"/>
</dbReference>
<dbReference type="PANTHER" id="PTHR33992">
    <property type="entry name" value="RIBONUCLEASE P PROTEIN COMPONENT"/>
    <property type="match status" value="1"/>
</dbReference>
<dbReference type="PANTHER" id="PTHR33992:SF1">
    <property type="entry name" value="RIBONUCLEASE P PROTEIN COMPONENT"/>
    <property type="match status" value="1"/>
</dbReference>
<dbReference type="Pfam" id="PF00825">
    <property type="entry name" value="Ribonuclease_P"/>
    <property type="match status" value="1"/>
</dbReference>
<dbReference type="SUPFAM" id="SSF54211">
    <property type="entry name" value="Ribosomal protein S5 domain 2-like"/>
    <property type="match status" value="1"/>
</dbReference>
<dbReference type="PROSITE" id="PS00648">
    <property type="entry name" value="RIBONUCLEASE_P"/>
    <property type="match status" value="1"/>
</dbReference>
<proteinExistence type="inferred from homology"/>